<organism>
    <name type="scientific">Polaromonas naphthalenivorans (strain CJ2)</name>
    <dbReference type="NCBI Taxonomy" id="365044"/>
    <lineage>
        <taxon>Bacteria</taxon>
        <taxon>Pseudomonadati</taxon>
        <taxon>Pseudomonadota</taxon>
        <taxon>Betaproteobacteria</taxon>
        <taxon>Burkholderiales</taxon>
        <taxon>Comamonadaceae</taxon>
        <taxon>Polaromonas</taxon>
    </lineage>
</organism>
<reference key="1">
    <citation type="journal article" date="2009" name="Environ. Microbiol.">
        <title>The genome of Polaromonas naphthalenivorans strain CJ2, isolated from coal tar-contaminated sediment, reveals physiological and metabolic versatility and evolution through extensive horizontal gene transfer.</title>
        <authorList>
            <person name="Yagi J.M."/>
            <person name="Sims D."/>
            <person name="Brettin T."/>
            <person name="Bruce D."/>
            <person name="Madsen E.L."/>
        </authorList>
    </citation>
    <scope>NUCLEOTIDE SEQUENCE [LARGE SCALE GENOMIC DNA]</scope>
    <source>
        <strain>CJ2</strain>
    </source>
</reference>
<name>GLMU_POLNA</name>
<protein>
    <recommendedName>
        <fullName evidence="1">Bifunctional protein GlmU</fullName>
    </recommendedName>
    <domain>
        <recommendedName>
            <fullName evidence="1">UDP-N-acetylglucosamine pyrophosphorylase</fullName>
            <ecNumber evidence="1">2.7.7.23</ecNumber>
        </recommendedName>
        <alternativeName>
            <fullName evidence="1">N-acetylglucosamine-1-phosphate uridyltransferase</fullName>
        </alternativeName>
    </domain>
    <domain>
        <recommendedName>
            <fullName evidence="1">Glucosamine-1-phosphate N-acetyltransferase</fullName>
            <ecNumber evidence="1">2.3.1.157</ecNumber>
        </recommendedName>
    </domain>
</protein>
<proteinExistence type="inferred from homology"/>
<feature type="chain" id="PRO_0000337738" description="Bifunctional protein GlmU">
    <location>
        <begin position="1"/>
        <end position="473"/>
    </location>
</feature>
<feature type="region of interest" description="Pyrophosphorylase" evidence="1">
    <location>
        <begin position="1"/>
        <end position="240"/>
    </location>
</feature>
<feature type="region of interest" description="Linker" evidence="1">
    <location>
        <begin position="241"/>
        <end position="261"/>
    </location>
</feature>
<feature type="region of interest" description="N-acetyltransferase" evidence="1">
    <location>
        <begin position="262"/>
        <end position="473"/>
    </location>
</feature>
<feature type="active site" description="Proton acceptor" evidence="1">
    <location>
        <position position="378"/>
    </location>
</feature>
<feature type="binding site" evidence="1">
    <location>
        <position position="25"/>
    </location>
    <ligand>
        <name>UDP-N-acetyl-alpha-D-glucosamine</name>
        <dbReference type="ChEBI" id="CHEBI:57705"/>
    </ligand>
</feature>
<feature type="binding site" evidence="1">
    <location>
        <position position="83"/>
    </location>
    <ligand>
        <name>UDP-N-acetyl-alpha-D-glucosamine</name>
        <dbReference type="ChEBI" id="CHEBI:57705"/>
    </ligand>
</feature>
<feature type="binding site" evidence="1">
    <location>
        <begin position="88"/>
        <end position="89"/>
    </location>
    <ligand>
        <name>UDP-N-acetyl-alpha-D-glucosamine</name>
        <dbReference type="ChEBI" id="CHEBI:57705"/>
    </ligand>
</feature>
<feature type="binding site" evidence="1">
    <location>
        <begin position="110"/>
        <end position="112"/>
    </location>
    <ligand>
        <name>UDP-N-acetyl-alpha-D-glucosamine</name>
        <dbReference type="ChEBI" id="CHEBI:57705"/>
    </ligand>
</feature>
<feature type="binding site" evidence="1">
    <location>
        <position position="112"/>
    </location>
    <ligand>
        <name>Mg(2+)</name>
        <dbReference type="ChEBI" id="CHEBI:18420"/>
    </ligand>
</feature>
<feature type="binding site" evidence="1">
    <location>
        <position position="147"/>
    </location>
    <ligand>
        <name>UDP-N-acetyl-alpha-D-glucosamine</name>
        <dbReference type="ChEBI" id="CHEBI:57705"/>
    </ligand>
</feature>
<feature type="binding site" evidence="1">
    <location>
        <position position="165"/>
    </location>
    <ligand>
        <name>UDP-N-acetyl-alpha-D-glucosamine</name>
        <dbReference type="ChEBI" id="CHEBI:57705"/>
    </ligand>
</feature>
<feature type="binding site" evidence="1">
    <location>
        <position position="238"/>
    </location>
    <ligand>
        <name>Mg(2+)</name>
        <dbReference type="ChEBI" id="CHEBI:18420"/>
    </ligand>
</feature>
<feature type="binding site" evidence="1">
    <location>
        <position position="238"/>
    </location>
    <ligand>
        <name>UDP-N-acetyl-alpha-D-glucosamine</name>
        <dbReference type="ChEBI" id="CHEBI:57705"/>
    </ligand>
</feature>
<feature type="binding site" evidence="1">
    <location>
        <position position="348"/>
    </location>
    <ligand>
        <name>UDP-N-acetyl-alpha-D-glucosamine</name>
        <dbReference type="ChEBI" id="CHEBI:57705"/>
    </ligand>
</feature>
<feature type="binding site" evidence="1">
    <location>
        <position position="366"/>
    </location>
    <ligand>
        <name>UDP-N-acetyl-alpha-D-glucosamine</name>
        <dbReference type="ChEBI" id="CHEBI:57705"/>
    </ligand>
</feature>
<feature type="binding site" evidence="1">
    <location>
        <position position="381"/>
    </location>
    <ligand>
        <name>UDP-N-acetyl-alpha-D-glucosamine</name>
        <dbReference type="ChEBI" id="CHEBI:57705"/>
    </ligand>
</feature>
<feature type="binding site" evidence="1">
    <location>
        <position position="392"/>
    </location>
    <ligand>
        <name>UDP-N-acetyl-alpha-D-glucosamine</name>
        <dbReference type="ChEBI" id="CHEBI:57705"/>
    </ligand>
</feature>
<feature type="binding site" evidence="1">
    <location>
        <position position="395"/>
    </location>
    <ligand>
        <name>acetyl-CoA</name>
        <dbReference type="ChEBI" id="CHEBI:57288"/>
    </ligand>
</feature>
<feature type="binding site" evidence="1">
    <location>
        <begin position="401"/>
        <end position="402"/>
    </location>
    <ligand>
        <name>acetyl-CoA</name>
        <dbReference type="ChEBI" id="CHEBI:57288"/>
    </ligand>
</feature>
<feature type="binding site" evidence="1">
    <location>
        <position position="420"/>
    </location>
    <ligand>
        <name>acetyl-CoA</name>
        <dbReference type="ChEBI" id="CHEBI:57288"/>
    </ligand>
</feature>
<feature type="binding site" evidence="1">
    <location>
        <position position="438"/>
    </location>
    <ligand>
        <name>acetyl-CoA</name>
        <dbReference type="ChEBI" id="CHEBI:57288"/>
    </ligand>
</feature>
<feature type="binding site" evidence="1">
    <location>
        <position position="455"/>
    </location>
    <ligand>
        <name>acetyl-CoA</name>
        <dbReference type="ChEBI" id="CHEBI:57288"/>
    </ligand>
</feature>
<sequence length="473" mass="49386">MAIHPLDVVIMAAGKGTRMKSSLPKVLHRLGGRALLAHVLDCAAQLSARQAVVITGHGAMEVEAACARRTGASADLSLKFVRQEPQLGTGHAVQQALPVLPDDGITLVLSGDVPLTQAATLQALLAQCDGQRLALLTLSMADPAGYGRIVRAGTQASAQVRAIVEHKDASEAERAIHEIYSGIMAVPTRLLRRWLARLDNDNVQNEYYLTDIVKFAVADGVAVVAHQITDAAQVAGVNSPVQLAELERVYQQRLATTLMEQGVRLADPARLDVRGQLTCGQDVEIDVNCVFDGRVSLGQGVRIGANCVIANAAIAAGAVIHPFTHIDGEKLGVQVGEGAMVGPFARLRPGANLGAEVHIGNFVEVKNSTLARGAKANHLAYLGDATVGERVNYGAGSITANYDGANKHRTVIEADVHIGSNCVLVAPVTIGAGATVGGGSTITRDVPAGALSVGRGRQVSIANWARPVKKPGV</sequence>
<accession>A1VJM6</accession>
<comment type="function">
    <text evidence="1">Catalyzes the last two sequential reactions in the de novo biosynthetic pathway for UDP-N-acetylglucosamine (UDP-GlcNAc). The C-terminal domain catalyzes the transfer of acetyl group from acetyl coenzyme A to glucosamine-1-phosphate (GlcN-1-P) to produce N-acetylglucosamine-1-phosphate (GlcNAc-1-P), which is converted into UDP-GlcNAc by the transfer of uridine 5-monophosphate (from uridine 5-triphosphate), a reaction catalyzed by the N-terminal domain.</text>
</comment>
<comment type="catalytic activity">
    <reaction evidence="1">
        <text>alpha-D-glucosamine 1-phosphate + acetyl-CoA = N-acetyl-alpha-D-glucosamine 1-phosphate + CoA + H(+)</text>
        <dbReference type="Rhea" id="RHEA:13725"/>
        <dbReference type="ChEBI" id="CHEBI:15378"/>
        <dbReference type="ChEBI" id="CHEBI:57287"/>
        <dbReference type="ChEBI" id="CHEBI:57288"/>
        <dbReference type="ChEBI" id="CHEBI:57776"/>
        <dbReference type="ChEBI" id="CHEBI:58516"/>
        <dbReference type="EC" id="2.3.1.157"/>
    </reaction>
</comment>
<comment type="catalytic activity">
    <reaction evidence="1">
        <text>N-acetyl-alpha-D-glucosamine 1-phosphate + UTP + H(+) = UDP-N-acetyl-alpha-D-glucosamine + diphosphate</text>
        <dbReference type="Rhea" id="RHEA:13509"/>
        <dbReference type="ChEBI" id="CHEBI:15378"/>
        <dbReference type="ChEBI" id="CHEBI:33019"/>
        <dbReference type="ChEBI" id="CHEBI:46398"/>
        <dbReference type="ChEBI" id="CHEBI:57705"/>
        <dbReference type="ChEBI" id="CHEBI:57776"/>
        <dbReference type="EC" id="2.7.7.23"/>
    </reaction>
</comment>
<comment type="cofactor">
    <cofactor evidence="1">
        <name>Mg(2+)</name>
        <dbReference type="ChEBI" id="CHEBI:18420"/>
    </cofactor>
    <text evidence="1">Binds 1 Mg(2+) ion per subunit.</text>
</comment>
<comment type="pathway">
    <text evidence="1">Nucleotide-sugar biosynthesis; UDP-N-acetyl-alpha-D-glucosamine biosynthesis; N-acetyl-alpha-D-glucosamine 1-phosphate from alpha-D-glucosamine 6-phosphate (route II): step 2/2.</text>
</comment>
<comment type="pathway">
    <text evidence="1">Nucleotide-sugar biosynthesis; UDP-N-acetyl-alpha-D-glucosamine biosynthesis; UDP-N-acetyl-alpha-D-glucosamine from N-acetyl-alpha-D-glucosamine 1-phosphate: step 1/1.</text>
</comment>
<comment type="pathway">
    <text evidence="1">Bacterial outer membrane biogenesis; LPS lipid A biosynthesis.</text>
</comment>
<comment type="subunit">
    <text evidence="1">Homotrimer.</text>
</comment>
<comment type="subcellular location">
    <subcellularLocation>
        <location evidence="1">Cytoplasm</location>
    </subcellularLocation>
</comment>
<comment type="similarity">
    <text evidence="1">In the N-terminal section; belongs to the N-acetylglucosamine-1-phosphate uridyltransferase family.</text>
</comment>
<comment type="similarity">
    <text evidence="1">In the C-terminal section; belongs to the transferase hexapeptide repeat family.</text>
</comment>
<keyword id="KW-0012">Acyltransferase</keyword>
<keyword id="KW-0133">Cell shape</keyword>
<keyword id="KW-0961">Cell wall biogenesis/degradation</keyword>
<keyword id="KW-0963">Cytoplasm</keyword>
<keyword id="KW-0460">Magnesium</keyword>
<keyword id="KW-0479">Metal-binding</keyword>
<keyword id="KW-0511">Multifunctional enzyme</keyword>
<keyword id="KW-0548">Nucleotidyltransferase</keyword>
<keyword id="KW-0573">Peptidoglycan synthesis</keyword>
<keyword id="KW-1185">Reference proteome</keyword>
<keyword id="KW-0677">Repeat</keyword>
<keyword id="KW-0808">Transferase</keyword>
<gene>
    <name evidence="1" type="primary">glmU</name>
    <name type="ordered locus">Pnap_0533</name>
</gene>
<evidence type="ECO:0000255" key="1">
    <source>
        <dbReference type="HAMAP-Rule" id="MF_01631"/>
    </source>
</evidence>
<dbReference type="EC" id="2.7.7.23" evidence="1"/>
<dbReference type="EC" id="2.3.1.157" evidence="1"/>
<dbReference type="EMBL" id="CP000529">
    <property type="protein sequence ID" value="ABM35854.1"/>
    <property type="molecule type" value="Genomic_DNA"/>
</dbReference>
<dbReference type="RefSeq" id="WP_011799954.1">
    <property type="nucleotide sequence ID" value="NC_008781.1"/>
</dbReference>
<dbReference type="SMR" id="A1VJM6"/>
<dbReference type="STRING" id="365044.Pnap_0533"/>
<dbReference type="KEGG" id="pna:Pnap_0533"/>
<dbReference type="eggNOG" id="COG1207">
    <property type="taxonomic scope" value="Bacteria"/>
</dbReference>
<dbReference type="HOGENOM" id="CLU_029499_15_2_4"/>
<dbReference type="OrthoDB" id="9775031at2"/>
<dbReference type="UniPathway" id="UPA00113">
    <property type="reaction ID" value="UER00532"/>
</dbReference>
<dbReference type="UniPathway" id="UPA00113">
    <property type="reaction ID" value="UER00533"/>
</dbReference>
<dbReference type="UniPathway" id="UPA00973"/>
<dbReference type="Proteomes" id="UP000000644">
    <property type="component" value="Chromosome"/>
</dbReference>
<dbReference type="GO" id="GO:0005737">
    <property type="term" value="C:cytoplasm"/>
    <property type="evidence" value="ECO:0007669"/>
    <property type="project" value="UniProtKB-SubCell"/>
</dbReference>
<dbReference type="GO" id="GO:0016020">
    <property type="term" value="C:membrane"/>
    <property type="evidence" value="ECO:0007669"/>
    <property type="project" value="GOC"/>
</dbReference>
<dbReference type="GO" id="GO:0019134">
    <property type="term" value="F:glucosamine-1-phosphate N-acetyltransferase activity"/>
    <property type="evidence" value="ECO:0007669"/>
    <property type="project" value="UniProtKB-UniRule"/>
</dbReference>
<dbReference type="GO" id="GO:0000287">
    <property type="term" value="F:magnesium ion binding"/>
    <property type="evidence" value="ECO:0007669"/>
    <property type="project" value="UniProtKB-UniRule"/>
</dbReference>
<dbReference type="GO" id="GO:0003977">
    <property type="term" value="F:UDP-N-acetylglucosamine diphosphorylase activity"/>
    <property type="evidence" value="ECO:0007669"/>
    <property type="project" value="UniProtKB-UniRule"/>
</dbReference>
<dbReference type="GO" id="GO:0000902">
    <property type="term" value="P:cell morphogenesis"/>
    <property type="evidence" value="ECO:0007669"/>
    <property type="project" value="UniProtKB-UniRule"/>
</dbReference>
<dbReference type="GO" id="GO:0071555">
    <property type="term" value="P:cell wall organization"/>
    <property type="evidence" value="ECO:0007669"/>
    <property type="project" value="UniProtKB-KW"/>
</dbReference>
<dbReference type="GO" id="GO:0009245">
    <property type="term" value="P:lipid A biosynthetic process"/>
    <property type="evidence" value="ECO:0007669"/>
    <property type="project" value="UniProtKB-UniRule"/>
</dbReference>
<dbReference type="GO" id="GO:0009252">
    <property type="term" value="P:peptidoglycan biosynthetic process"/>
    <property type="evidence" value="ECO:0007669"/>
    <property type="project" value="UniProtKB-UniRule"/>
</dbReference>
<dbReference type="GO" id="GO:0008360">
    <property type="term" value="P:regulation of cell shape"/>
    <property type="evidence" value="ECO:0007669"/>
    <property type="project" value="UniProtKB-KW"/>
</dbReference>
<dbReference type="GO" id="GO:0006048">
    <property type="term" value="P:UDP-N-acetylglucosamine biosynthetic process"/>
    <property type="evidence" value="ECO:0007669"/>
    <property type="project" value="UniProtKB-UniPathway"/>
</dbReference>
<dbReference type="CDD" id="cd02540">
    <property type="entry name" value="GT2_GlmU_N_bac"/>
    <property type="match status" value="1"/>
</dbReference>
<dbReference type="CDD" id="cd03353">
    <property type="entry name" value="LbH_GlmU_C"/>
    <property type="match status" value="1"/>
</dbReference>
<dbReference type="Gene3D" id="2.160.10.10">
    <property type="entry name" value="Hexapeptide repeat proteins"/>
    <property type="match status" value="1"/>
</dbReference>
<dbReference type="Gene3D" id="3.90.550.10">
    <property type="entry name" value="Spore Coat Polysaccharide Biosynthesis Protein SpsA, Chain A"/>
    <property type="match status" value="1"/>
</dbReference>
<dbReference type="HAMAP" id="MF_01631">
    <property type="entry name" value="GlmU"/>
    <property type="match status" value="1"/>
</dbReference>
<dbReference type="InterPro" id="IPR005882">
    <property type="entry name" value="Bifunctional_GlmU"/>
</dbReference>
<dbReference type="InterPro" id="IPR050065">
    <property type="entry name" value="GlmU-like"/>
</dbReference>
<dbReference type="InterPro" id="IPR038009">
    <property type="entry name" value="GlmU_C_LbH"/>
</dbReference>
<dbReference type="InterPro" id="IPR001451">
    <property type="entry name" value="Hexapep"/>
</dbReference>
<dbReference type="InterPro" id="IPR025877">
    <property type="entry name" value="MobA-like_NTP_Trfase"/>
</dbReference>
<dbReference type="InterPro" id="IPR029044">
    <property type="entry name" value="Nucleotide-diphossugar_trans"/>
</dbReference>
<dbReference type="InterPro" id="IPR011004">
    <property type="entry name" value="Trimer_LpxA-like_sf"/>
</dbReference>
<dbReference type="NCBIfam" id="TIGR01173">
    <property type="entry name" value="glmU"/>
    <property type="match status" value="1"/>
</dbReference>
<dbReference type="PANTHER" id="PTHR43584:SF3">
    <property type="entry name" value="BIFUNCTIONAL PROTEIN GLMU"/>
    <property type="match status" value="1"/>
</dbReference>
<dbReference type="PANTHER" id="PTHR43584">
    <property type="entry name" value="NUCLEOTIDYL TRANSFERASE"/>
    <property type="match status" value="1"/>
</dbReference>
<dbReference type="Pfam" id="PF00132">
    <property type="entry name" value="Hexapep"/>
    <property type="match status" value="1"/>
</dbReference>
<dbReference type="Pfam" id="PF12804">
    <property type="entry name" value="NTP_transf_3"/>
    <property type="match status" value="1"/>
</dbReference>
<dbReference type="SUPFAM" id="SSF53448">
    <property type="entry name" value="Nucleotide-diphospho-sugar transferases"/>
    <property type="match status" value="1"/>
</dbReference>
<dbReference type="SUPFAM" id="SSF51161">
    <property type="entry name" value="Trimeric LpxA-like enzymes"/>
    <property type="match status" value="1"/>
</dbReference>